<comment type="function">
    <text evidence="1">May play important roles in cardiac development and/or cardiac function.</text>
</comment>
<comment type="subcellular location">
    <subcellularLocation>
        <location evidence="1">Nucleus</location>
    </subcellularLocation>
</comment>
<proteinExistence type="evidence at transcript level"/>
<evidence type="ECO:0000250" key="1"/>
<evidence type="ECO:0000256" key="2">
    <source>
        <dbReference type="SAM" id="MobiDB-lite"/>
    </source>
</evidence>
<feature type="chain" id="PRO_0000346161" description="Leucine-rich repeat-containing protein 10">
    <location>
        <begin position="1"/>
        <end position="278"/>
    </location>
</feature>
<feature type="repeat" description="LRR 1">
    <location>
        <begin position="30"/>
        <end position="51"/>
    </location>
</feature>
<feature type="repeat" description="LRR 2">
    <location>
        <begin position="52"/>
        <end position="74"/>
    </location>
</feature>
<feature type="repeat" description="LRR 3">
    <location>
        <begin position="76"/>
        <end position="97"/>
    </location>
</feature>
<feature type="repeat" description="LRR 4">
    <location>
        <begin position="98"/>
        <end position="121"/>
    </location>
</feature>
<feature type="repeat" description="LRR 5">
    <location>
        <begin position="123"/>
        <end position="143"/>
    </location>
</feature>
<feature type="repeat" description="LRR 6">
    <location>
        <begin position="144"/>
        <end position="166"/>
    </location>
</feature>
<feature type="repeat" description="LRR 7">
    <location>
        <begin position="167"/>
        <end position="189"/>
    </location>
</feature>
<feature type="repeat" description="LRR 8">
    <location>
        <begin position="191"/>
        <end position="213"/>
    </location>
</feature>
<feature type="region of interest" description="Disordered" evidence="2">
    <location>
        <begin position="239"/>
        <end position="278"/>
    </location>
</feature>
<feature type="compositionally biased region" description="Basic and acidic residues" evidence="2">
    <location>
        <begin position="239"/>
        <end position="250"/>
    </location>
</feature>
<feature type="compositionally biased region" description="Pro residues" evidence="2">
    <location>
        <begin position="269"/>
        <end position="278"/>
    </location>
</feature>
<protein>
    <recommendedName>
        <fullName>Leucine-rich repeat-containing protein 10</fullName>
    </recommendedName>
</protein>
<name>LRC10_BOVIN</name>
<gene>
    <name type="primary">LRRC10</name>
</gene>
<reference key="1">
    <citation type="submission" date="2006-02" db="EMBL/GenBank/DDBJ databases">
        <authorList>
            <consortium name="NIH - Mammalian Gene Collection (MGC) project"/>
        </authorList>
    </citation>
    <scope>NUCLEOTIDE SEQUENCE [LARGE SCALE MRNA]</scope>
    <source>
        <strain>Hereford</strain>
        <tissue>Heart ventricle</tissue>
    </source>
</reference>
<keyword id="KW-0433">Leucine-rich repeat</keyword>
<keyword id="KW-0539">Nucleus</keyword>
<keyword id="KW-1185">Reference proteome</keyword>
<keyword id="KW-0677">Repeat</keyword>
<dbReference type="EMBL" id="BC114091">
    <property type="protein sequence ID" value="AAI14092.1"/>
    <property type="molecule type" value="mRNA"/>
</dbReference>
<dbReference type="RefSeq" id="NP_001069225.1">
    <property type="nucleotide sequence ID" value="NM_001075757.2"/>
</dbReference>
<dbReference type="SMR" id="Q24K06"/>
<dbReference type="FunCoup" id="Q24K06">
    <property type="interactions" value="51"/>
</dbReference>
<dbReference type="STRING" id="9913.ENSBTAP00000025497"/>
<dbReference type="PaxDb" id="9913-ENSBTAP00000025497"/>
<dbReference type="Ensembl" id="ENSBTAT00000025497.4">
    <property type="protein sequence ID" value="ENSBTAP00000025497.3"/>
    <property type="gene ID" value="ENSBTAG00000019157.4"/>
</dbReference>
<dbReference type="GeneID" id="517750"/>
<dbReference type="KEGG" id="bta:517750"/>
<dbReference type="CTD" id="376132"/>
<dbReference type="VEuPathDB" id="HostDB:ENSBTAG00000019157"/>
<dbReference type="VGNC" id="VGNC:52796">
    <property type="gene designation" value="LRRC10"/>
</dbReference>
<dbReference type="eggNOG" id="KOG0619">
    <property type="taxonomic scope" value="Eukaryota"/>
</dbReference>
<dbReference type="GeneTree" id="ENSGT00940000155040"/>
<dbReference type="HOGENOM" id="CLU_000288_18_15_1"/>
<dbReference type="InParanoid" id="Q24K06"/>
<dbReference type="OMA" id="LWIESNC"/>
<dbReference type="OrthoDB" id="40118at2759"/>
<dbReference type="TreeFam" id="TF332853"/>
<dbReference type="Proteomes" id="UP000009136">
    <property type="component" value="Chromosome 5"/>
</dbReference>
<dbReference type="Bgee" id="ENSBTAG00000019157">
    <property type="expression patterns" value="Expressed in cardiac ventricle and 14 other cell types or tissues"/>
</dbReference>
<dbReference type="GO" id="GO:0005856">
    <property type="term" value="C:cytoskeleton"/>
    <property type="evidence" value="ECO:0000318"/>
    <property type="project" value="GO_Central"/>
</dbReference>
<dbReference type="GO" id="GO:0005739">
    <property type="term" value="C:mitochondrion"/>
    <property type="evidence" value="ECO:0007669"/>
    <property type="project" value="Ensembl"/>
</dbReference>
<dbReference type="GO" id="GO:0005634">
    <property type="term" value="C:nucleus"/>
    <property type="evidence" value="ECO:0007669"/>
    <property type="project" value="UniProtKB-SubCell"/>
</dbReference>
<dbReference type="GO" id="GO:0030017">
    <property type="term" value="C:sarcomere"/>
    <property type="evidence" value="ECO:0000318"/>
    <property type="project" value="GO_Central"/>
</dbReference>
<dbReference type="GO" id="GO:0003779">
    <property type="term" value="F:actin binding"/>
    <property type="evidence" value="ECO:0000318"/>
    <property type="project" value="GO_Central"/>
</dbReference>
<dbReference type="GO" id="GO:0051393">
    <property type="term" value="F:alpha-actinin binding"/>
    <property type="evidence" value="ECO:0007669"/>
    <property type="project" value="Ensembl"/>
</dbReference>
<dbReference type="GO" id="GO:0055013">
    <property type="term" value="P:cardiac muscle cell development"/>
    <property type="evidence" value="ECO:0000318"/>
    <property type="project" value="GO_Central"/>
</dbReference>
<dbReference type="FunFam" id="3.80.10.10:FF:002815">
    <property type="entry name" value="Leucine-rich repeat-containing protein 10"/>
    <property type="match status" value="1"/>
</dbReference>
<dbReference type="Gene3D" id="3.80.10.10">
    <property type="entry name" value="Ribonuclease Inhibitor"/>
    <property type="match status" value="2"/>
</dbReference>
<dbReference type="InterPro" id="IPR001611">
    <property type="entry name" value="Leu-rich_rpt"/>
</dbReference>
<dbReference type="InterPro" id="IPR003591">
    <property type="entry name" value="Leu-rich_rpt_typical-subtyp"/>
</dbReference>
<dbReference type="InterPro" id="IPR032675">
    <property type="entry name" value="LRR_dom_sf"/>
</dbReference>
<dbReference type="InterPro" id="IPR050216">
    <property type="entry name" value="LRR_domain-containing"/>
</dbReference>
<dbReference type="PANTHER" id="PTHR48051">
    <property type="match status" value="1"/>
</dbReference>
<dbReference type="PANTHER" id="PTHR48051:SF37">
    <property type="entry name" value="LEUCINE RICH REPEAT CONTAINING 10"/>
    <property type="match status" value="1"/>
</dbReference>
<dbReference type="Pfam" id="PF13855">
    <property type="entry name" value="LRR_8"/>
    <property type="match status" value="1"/>
</dbReference>
<dbReference type="SMART" id="SM00364">
    <property type="entry name" value="LRR_BAC"/>
    <property type="match status" value="6"/>
</dbReference>
<dbReference type="SMART" id="SM00369">
    <property type="entry name" value="LRR_TYP"/>
    <property type="match status" value="5"/>
</dbReference>
<dbReference type="SUPFAM" id="SSF52058">
    <property type="entry name" value="L domain-like"/>
    <property type="match status" value="1"/>
</dbReference>
<dbReference type="PROSITE" id="PS51450">
    <property type="entry name" value="LRR"/>
    <property type="match status" value="7"/>
</dbReference>
<organism>
    <name type="scientific">Bos taurus</name>
    <name type="common">Bovine</name>
    <dbReference type="NCBI Taxonomy" id="9913"/>
    <lineage>
        <taxon>Eukaryota</taxon>
        <taxon>Metazoa</taxon>
        <taxon>Chordata</taxon>
        <taxon>Craniata</taxon>
        <taxon>Vertebrata</taxon>
        <taxon>Euteleostomi</taxon>
        <taxon>Mammalia</taxon>
        <taxon>Eutheria</taxon>
        <taxon>Laurasiatheria</taxon>
        <taxon>Artiodactyla</taxon>
        <taxon>Ruminantia</taxon>
        <taxon>Pecora</taxon>
        <taxon>Bovidae</taxon>
        <taxon>Bovinae</taxon>
        <taxon>Bos</taxon>
    </lineage>
</organism>
<accession>Q24K06</accession>
<sequence>MGNTIRAFVAFIPADRCQNYVARDLREMPLDRMVDLSGSQLRRFPVHVCSFQELVKLYLSDNRLNSLPPELGQLQNLQILALDFNNFKALPQVVCTLKQLCILYLGNNKLCDLPRELSLLQNLRTLWVEANYLTKLPEVVCELSLLKTLHAGSNALRLLPGQLQRLRELRTIWLSGNLLTDFPPVLLHMPFLEIIDVDRNSIRYFPSLAHLSSLKLVIYDHNPCRNAPKVAKGVRRVGRWAEETPEPDPRKARRYALAREESQEAQLPALPPLPPTNS</sequence>